<gene>
    <name evidence="1" type="primary">MT-ND3</name>
    <name type="synonym">MTND3</name>
    <name type="synonym">NADH3</name>
    <name type="synonym">ND3</name>
</gene>
<comment type="function">
    <text evidence="1">Core subunit of the mitochondrial membrane respiratory chain NADH dehydrogenase (Complex I) which catalyzes electron transfer from NADH through the respiratory chain, using ubiquinone as an electron acceptor. Essential for the catalytic activity of complex I.</text>
</comment>
<comment type="catalytic activity">
    <reaction evidence="1">
        <text>a ubiquinone + NADH + 5 H(+)(in) = a ubiquinol + NAD(+) + 4 H(+)(out)</text>
        <dbReference type="Rhea" id="RHEA:29091"/>
        <dbReference type="Rhea" id="RHEA-COMP:9565"/>
        <dbReference type="Rhea" id="RHEA-COMP:9566"/>
        <dbReference type="ChEBI" id="CHEBI:15378"/>
        <dbReference type="ChEBI" id="CHEBI:16389"/>
        <dbReference type="ChEBI" id="CHEBI:17976"/>
        <dbReference type="ChEBI" id="CHEBI:57540"/>
        <dbReference type="ChEBI" id="CHEBI:57945"/>
        <dbReference type="EC" id="7.1.1.2"/>
    </reaction>
</comment>
<comment type="subunit">
    <text evidence="1">Core subunit of respiratory chain NADH dehydrogenase (Complex I) which is composed of 45 different subunits. Interacts with TMEM186. Interacts with TMEM242 (By similarity).</text>
</comment>
<comment type="subcellular location">
    <subcellularLocation>
        <location evidence="2">Mitochondrion inner membrane</location>
        <topology evidence="3">Multi-pass membrane protein</topology>
    </subcellularLocation>
</comment>
<comment type="similarity">
    <text evidence="4">Belongs to the complex I subunit 3 family.</text>
</comment>
<keyword id="KW-0249">Electron transport</keyword>
<keyword id="KW-0472">Membrane</keyword>
<keyword id="KW-0496">Mitochondrion</keyword>
<keyword id="KW-0999">Mitochondrion inner membrane</keyword>
<keyword id="KW-0520">NAD</keyword>
<keyword id="KW-0679">Respiratory chain</keyword>
<keyword id="KW-1278">Translocase</keyword>
<keyword id="KW-0812">Transmembrane</keyword>
<keyword id="KW-1133">Transmembrane helix</keyword>
<keyword id="KW-0813">Transport</keyword>
<keyword id="KW-0830">Ubiquinone</keyword>
<protein>
    <recommendedName>
        <fullName evidence="1">NADH-ubiquinone oxidoreductase chain 3</fullName>
        <ecNumber evidence="1">7.1.1.2</ecNumber>
    </recommendedName>
    <alternativeName>
        <fullName>NADH dehydrogenase subunit 3</fullName>
    </alternativeName>
</protein>
<dbReference type="EC" id="7.1.1.2" evidence="1"/>
<dbReference type="EMBL" id="U83816">
    <property type="protein sequence ID" value="AAB87175.1"/>
    <property type="molecule type" value="Genomic_DNA"/>
</dbReference>
<dbReference type="SMR" id="O21549"/>
<dbReference type="GO" id="GO:0005743">
    <property type="term" value="C:mitochondrial inner membrane"/>
    <property type="evidence" value="ECO:0000250"/>
    <property type="project" value="UniProtKB"/>
</dbReference>
<dbReference type="GO" id="GO:0030964">
    <property type="term" value="C:NADH dehydrogenase complex"/>
    <property type="evidence" value="ECO:0007669"/>
    <property type="project" value="TreeGrafter"/>
</dbReference>
<dbReference type="GO" id="GO:0008137">
    <property type="term" value="F:NADH dehydrogenase (ubiquinone) activity"/>
    <property type="evidence" value="ECO:0000250"/>
    <property type="project" value="UniProtKB"/>
</dbReference>
<dbReference type="GO" id="GO:0006120">
    <property type="term" value="P:mitochondrial electron transport, NADH to ubiquinone"/>
    <property type="evidence" value="ECO:0000250"/>
    <property type="project" value="UniProtKB"/>
</dbReference>
<dbReference type="FunFam" id="1.20.58.1610:FF:000004">
    <property type="entry name" value="NADH-quinone oxidoreductase subunit A"/>
    <property type="match status" value="1"/>
</dbReference>
<dbReference type="Gene3D" id="1.20.58.1610">
    <property type="entry name" value="NADH:ubiquinone/plastoquinone oxidoreductase, chain 3"/>
    <property type="match status" value="1"/>
</dbReference>
<dbReference type="InterPro" id="IPR000440">
    <property type="entry name" value="NADH_UbQ/plastoQ_OxRdtase_su3"/>
</dbReference>
<dbReference type="InterPro" id="IPR038430">
    <property type="entry name" value="NDAH_ubi_oxred_su3_sf"/>
</dbReference>
<dbReference type="PANTHER" id="PTHR11058">
    <property type="entry name" value="NADH-UBIQUINONE OXIDOREDUCTASE CHAIN 3"/>
    <property type="match status" value="1"/>
</dbReference>
<dbReference type="PANTHER" id="PTHR11058:SF9">
    <property type="entry name" value="NADH-UBIQUINONE OXIDOREDUCTASE CHAIN 3"/>
    <property type="match status" value="1"/>
</dbReference>
<dbReference type="Pfam" id="PF00507">
    <property type="entry name" value="Oxidored_q4"/>
    <property type="match status" value="1"/>
</dbReference>
<proteinExistence type="inferred from homology"/>
<name>NU3M_ELITY</name>
<accession>O21549</accession>
<reference key="1">
    <citation type="journal article" date="1998" name="Mol. Biol. Evol.">
        <title>Molecular systematics and paleobiogeography of the South American sigmodontine rodents.</title>
        <authorList>
            <person name="Engel S.R."/>
            <person name="Hogan K.M."/>
            <person name="Taylor J.F."/>
            <person name="Davis S.K."/>
        </authorList>
    </citation>
    <scope>NUCLEOTIDE SEQUENCE [GENOMIC DNA]</scope>
</reference>
<sequence length="115" mass="13046">MNAIVILFINATLSLGLITVAFWLPHLNIYAEKAGAYECGFDPMSSARLPFSMKFFLIGITFLLFDLEITLLLPLPWAMHSTNTYFTMLVSFLLVSVLALGLMYEWTNKGLEWTE</sequence>
<geneLocation type="mitochondrion"/>
<evidence type="ECO:0000250" key="1">
    <source>
        <dbReference type="UniProtKB" id="P03897"/>
    </source>
</evidence>
<evidence type="ECO:0000250" key="2">
    <source>
        <dbReference type="UniProtKB" id="P03898"/>
    </source>
</evidence>
<evidence type="ECO:0000255" key="3"/>
<evidence type="ECO:0000305" key="4"/>
<organism>
    <name type="scientific">Eligmodontia typus</name>
    <name type="common">Highland gerbil mouse</name>
    <dbReference type="NCBI Taxonomy" id="56221"/>
    <lineage>
        <taxon>Eukaryota</taxon>
        <taxon>Metazoa</taxon>
        <taxon>Chordata</taxon>
        <taxon>Craniata</taxon>
        <taxon>Vertebrata</taxon>
        <taxon>Euteleostomi</taxon>
        <taxon>Mammalia</taxon>
        <taxon>Eutheria</taxon>
        <taxon>Euarchontoglires</taxon>
        <taxon>Glires</taxon>
        <taxon>Rodentia</taxon>
        <taxon>Myomorpha</taxon>
        <taxon>Muroidea</taxon>
        <taxon>Cricetidae</taxon>
        <taxon>Sigmodontinae</taxon>
        <taxon>Eligmodontia</taxon>
    </lineage>
</organism>
<feature type="chain" id="PRO_0000117740" description="NADH-ubiquinone oxidoreductase chain 3">
    <location>
        <begin position="1"/>
        <end position="115"/>
    </location>
</feature>
<feature type="transmembrane region" description="Helical" evidence="3">
    <location>
        <begin position="4"/>
        <end position="24"/>
    </location>
</feature>
<feature type="transmembrane region" description="Helical" evidence="3">
    <location>
        <begin position="55"/>
        <end position="75"/>
    </location>
</feature>
<feature type="transmembrane region" description="Helical" evidence="3">
    <location>
        <begin position="84"/>
        <end position="104"/>
    </location>
</feature>